<name>RPH1_YEAST</name>
<dbReference type="EMBL" id="U18922">
    <property type="protein sequence ID" value="AAB64696.1"/>
    <property type="molecule type" value="Genomic_DNA"/>
</dbReference>
<dbReference type="EMBL" id="BK006939">
    <property type="protein sequence ID" value="DAA07831.1"/>
    <property type="molecule type" value="Genomic_DNA"/>
</dbReference>
<dbReference type="PIR" id="S50672">
    <property type="entry name" value="S50672"/>
</dbReference>
<dbReference type="RefSeq" id="NP_011096.1">
    <property type="nucleotide sequence ID" value="NM_001179059.1"/>
</dbReference>
<dbReference type="PDB" id="3OPT">
    <property type="method" value="X-ray"/>
    <property type="resolution" value="2.20 A"/>
    <property type="chains" value="A=1-373"/>
</dbReference>
<dbReference type="PDB" id="3OPW">
    <property type="method" value="X-ray"/>
    <property type="resolution" value="2.50 A"/>
    <property type="chains" value="A=1-373"/>
</dbReference>
<dbReference type="PDBsum" id="3OPT"/>
<dbReference type="PDBsum" id="3OPW"/>
<dbReference type="SMR" id="P39956"/>
<dbReference type="BioGRID" id="36922">
    <property type="interactions" value="148"/>
</dbReference>
<dbReference type="DIP" id="DIP-5418N"/>
<dbReference type="FunCoup" id="P39956">
    <property type="interactions" value="1914"/>
</dbReference>
<dbReference type="IntAct" id="P39956">
    <property type="interactions" value="2"/>
</dbReference>
<dbReference type="STRING" id="4932.YER169W"/>
<dbReference type="iPTMnet" id="P39956"/>
<dbReference type="PaxDb" id="4932-YER169W"/>
<dbReference type="PeptideAtlas" id="P39956"/>
<dbReference type="EnsemblFungi" id="YER169W_mRNA">
    <property type="protein sequence ID" value="YER169W"/>
    <property type="gene ID" value="YER169W"/>
</dbReference>
<dbReference type="GeneID" id="856916"/>
<dbReference type="KEGG" id="sce:YER169W"/>
<dbReference type="AGR" id="SGD:S000000971"/>
<dbReference type="SGD" id="S000000971">
    <property type="gene designation" value="RPH1"/>
</dbReference>
<dbReference type="VEuPathDB" id="FungiDB:YER169W"/>
<dbReference type="eggNOG" id="KOG0958">
    <property type="taxonomic scope" value="Eukaryota"/>
</dbReference>
<dbReference type="eggNOG" id="KOG1721">
    <property type="taxonomic scope" value="Eukaryota"/>
</dbReference>
<dbReference type="HOGENOM" id="CLU_008557_0_0_1"/>
<dbReference type="InParanoid" id="P39956"/>
<dbReference type="OMA" id="GIRCNKI"/>
<dbReference type="OrthoDB" id="9547406at2759"/>
<dbReference type="BioCyc" id="YEAST:G3O-30330-MONOMER"/>
<dbReference type="BRENDA" id="1.14.11.69">
    <property type="organism ID" value="984"/>
</dbReference>
<dbReference type="Reactome" id="R-SCE-3214842">
    <property type="pathway name" value="HDMs demethylate histones"/>
</dbReference>
<dbReference type="Reactome" id="R-SCE-5625886">
    <property type="pathway name" value="Activated PKN1 stimulates transcription of AR (androgen receptor) regulated genes KLK2 and KLK3"/>
</dbReference>
<dbReference type="Reactome" id="R-SCE-5693565">
    <property type="pathway name" value="Recruitment and ATM-mediated phosphorylation of repair and signaling proteins at DNA double strand breaks"/>
</dbReference>
<dbReference type="Reactome" id="R-SCE-9018519">
    <property type="pathway name" value="Estrogen-dependent gene expression"/>
</dbReference>
<dbReference type="BioGRID-ORCS" id="856916">
    <property type="hits" value="1 hit in 13 CRISPR screens"/>
</dbReference>
<dbReference type="EvolutionaryTrace" id="P39956"/>
<dbReference type="PRO" id="PR:P39956"/>
<dbReference type="Proteomes" id="UP000002311">
    <property type="component" value="Chromosome V"/>
</dbReference>
<dbReference type="RNAct" id="P39956">
    <property type="molecule type" value="protein"/>
</dbReference>
<dbReference type="GO" id="GO:0000785">
    <property type="term" value="C:chromatin"/>
    <property type="evidence" value="ECO:0000318"/>
    <property type="project" value="GO_Central"/>
</dbReference>
<dbReference type="GO" id="GO:0005634">
    <property type="term" value="C:nucleus"/>
    <property type="evidence" value="ECO:0000318"/>
    <property type="project" value="GO_Central"/>
</dbReference>
<dbReference type="GO" id="GO:0001227">
    <property type="term" value="F:DNA-binding transcription repressor activity, RNA polymerase II-specific"/>
    <property type="evidence" value="ECO:0000314"/>
    <property type="project" value="SGD"/>
</dbReference>
<dbReference type="GO" id="GO:0051864">
    <property type="term" value="F:histone H3K36 demethylase activity"/>
    <property type="evidence" value="ECO:0000314"/>
    <property type="project" value="SGD"/>
</dbReference>
<dbReference type="GO" id="GO:0032454">
    <property type="term" value="F:histone H3K9 demethylase activity"/>
    <property type="evidence" value="ECO:0000314"/>
    <property type="project" value="SGD"/>
</dbReference>
<dbReference type="GO" id="GO:0043565">
    <property type="term" value="F:sequence-specific DNA binding"/>
    <property type="evidence" value="ECO:0000314"/>
    <property type="project" value="SGD"/>
</dbReference>
<dbReference type="GO" id="GO:0008270">
    <property type="term" value="F:zinc ion binding"/>
    <property type="evidence" value="ECO:0007669"/>
    <property type="project" value="UniProtKB-KW"/>
</dbReference>
<dbReference type="GO" id="GO:0006338">
    <property type="term" value="P:chromatin remodeling"/>
    <property type="evidence" value="ECO:0000318"/>
    <property type="project" value="GO_Central"/>
</dbReference>
<dbReference type="GO" id="GO:0010507">
    <property type="term" value="P:negative regulation of autophagy"/>
    <property type="evidence" value="ECO:0000315"/>
    <property type="project" value="SGD"/>
</dbReference>
<dbReference type="GO" id="GO:0000122">
    <property type="term" value="P:negative regulation of transcription by RNA polymerase II"/>
    <property type="evidence" value="ECO:0000314"/>
    <property type="project" value="SGD"/>
</dbReference>
<dbReference type="GO" id="GO:0032968">
    <property type="term" value="P:positive regulation of transcription elongation by RNA polymerase II"/>
    <property type="evidence" value="ECO:0000316"/>
    <property type="project" value="SGD"/>
</dbReference>
<dbReference type="GO" id="GO:0010468">
    <property type="term" value="P:regulation of gene expression"/>
    <property type="evidence" value="ECO:0000318"/>
    <property type="project" value="GO_Central"/>
</dbReference>
<dbReference type="FunFam" id="3.30.160.60:FF:001692">
    <property type="entry name" value="Transcriptional activator/repressor GIS1"/>
    <property type="match status" value="1"/>
</dbReference>
<dbReference type="FunFam" id="2.60.120.650:FF:000038">
    <property type="entry name" value="Transcriptional repressor"/>
    <property type="match status" value="1"/>
</dbReference>
<dbReference type="FunFam" id="3.30.160.60:FF:000100">
    <property type="entry name" value="Zinc finger 45-like"/>
    <property type="match status" value="1"/>
</dbReference>
<dbReference type="Gene3D" id="3.30.160.60">
    <property type="entry name" value="Classic Zinc Finger"/>
    <property type="match status" value="2"/>
</dbReference>
<dbReference type="Gene3D" id="2.60.120.650">
    <property type="entry name" value="Cupin"/>
    <property type="match status" value="1"/>
</dbReference>
<dbReference type="InterPro" id="IPR003347">
    <property type="entry name" value="JmjC_dom"/>
</dbReference>
<dbReference type="InterPro" id="IPR003349">
    <property type="entry name" value="JmjN"/>
</dbReference>
<dbReference type="InterPro" id="IPR036236">
    <property type="entry name" value="Znf_C2H2_sf"/>
</dbReference>
<dbReference type="InterPro" id="IPR013087">
    <property type="entry name" value="Znf_C2H2_type"/>
</dbReference>
<dbReference type="PANTHER" id="PTHR10694:SF7">
    <property type="entry name" value="[HISTONE H3]-TRIMETHYL-L-LYSINE(9) DEMETHYLASE"/>
    <property type="match status" value="1"/>
</dbReference>
<dbReference type="PANTHER" id="PTHR10694">
    <property type="entry name" value="LYSINE-SPECIFIC DEMETHYLASE"/>
    <property type="match status" value="1"/>
</dbReference>
<dbReference type="Pfam" id="PF02373">
    <property type="entry name" value="JmjC"/>
    <property type="match status" value="1"/>
</dbReference>
<dbReference type="Pfam" id="PF02375">
    <property type="entry name" value="JmjN"/>
    <property type="match status" value="1"/>
</dbReference>
<dbReference type="Pfam" id="PF00096">
    <property type="entry name" value="zf-C2H2"/>
    <property type="match status" value="1"/>
</dbReference>
<dbReference type="SMART" id="SM00558">
    <property type="entry name" value="JmjC"/>
    <property type="match status" value="1"/>
</dbReference>
<dbReference type="SMART" id="SM00545">
    <property type="entry name" value="JmjN"/>
    <property type="match status" value="1"/>
</dbReference>
<dbReference type="SMART" id="SM00355">
    <property type="entry name" value="ZnF_C2H2"/>
    <property type="match status" value="2"/>
</dbReference>
<dbReference type="SUPFAM" id="SSF57667">
    <property type="entry name" value="beta-beta-alpha zinc fingers"/>
    <property type="match status" value="1"/>
</dbReference>
<dbReference type="SUPFAM" id="SSF51197">
    <property type="entry name" value="Clavaminate synthase-like"/>
    <property type="match status" value="1"/>
</dbReference>
<dbReference type="PROSITE" id="PS51184">
    <property type="entry name" value="JMJC"/>
    <property type="match status" value="1"/>
</dbReference>
<dbReference type="PROSITE" id="PS51183">
    <property type="entry name" value="JMJN"/>
    <property type="match status" value="1"/>
</dbReference>
<dbReference type="PROSITE" id="PS00028">
    <property type="entry name" value="ZINC_FINGER_C2H2_1"/>
    <property type="match status" value="1"/>
</dbReference>
<dbReference type="PROSITE" id="PS50157">
    <property type="entry name" value="ZINC_FINGER_C2H2_2"/>
    <property type="match status" value="2"/>
</dbReference>
<proteinExistence type="evidence at protein level"/>
<comment type="function">
    <text evidence="5 6">Transcriptional repressor of photolyase PHR1. Recognizes and binds the sequence AG(4) in the upstream repressing sequence of PHR1. Derepresses PHR1 transcription when phosphorylated.</text>
</comment>
<comment type="subcellular location">
    <subcellularLocation>
        <location evidence="2 7">Nucleus</location>
    </subcellularLocation>
</comment>
<comment type="PTM">
    <text evidence="6">RAD53-dependent phosphorylated in response to DNA damage.</text>
</comment>
<comment type="miscellaneous">
    <text evidence="8">Present with 2229 molecules/cell in log phase SD medium.</text>
</comment>
<keyword id="KW-0002">3D-structure</keyword>
<keyword id="KW-0238">DNA-binding</keyword>
<keyword id="KW-0479">Metal-binding</keyword>
<keyword id="KW-0539">Nucleus</keyword>
<keyword id="KW-0597">Phosphoprotein</keyword>
<keyword id="KW-1185">Reference proteome</keyword>
<keyword id="KW-0677">Repeat</keyword>
<keyword id="KW-0678">Repressor</keyword>
<keyword id="KW-0804">Transcription</keyword>
<keyword id="KW-0805">Transcription regulation</keyword>
<keyword id="KW-0862">Zinc</keyword>
<keyword id="KW-0863">Zinc-finger</keyword>
<reference key="1">
    <citation type="journal article" date="1997" name="Nature">
        <title>The nucleotide sequence of Saccharomyces cerevisiae chromosome V.</title>
        <authorList>
            <person name="Dietrich F.S."/>
            <person name="Mulligan J.T."/>
            <person name="Hennessy K.M."/>
            <person name="Yelton M.A."/>
            <person name="Allen E."/>
            <person name="Araujo R."/>
            <person name="Aviles E."/>
            <person name="Berno A."/>
            <person name="Brennan T."/>
            <person name="Carpenter J."/>
            <person name="Chen E."/>
            <person name="Cherry J.M."/>
            <person name="Chung E."/>
            <person name="Duncan M."/>
            <person name="Guzman E."/>
            <person name="Hartzell G."/>
            <person name="Hunicke-Smith S."/>
            <person name="Hyman R.W."/>
            <person name="Kayser A."/>
            <person name="Komp C."/>
            <person name="Lashkari D."/>
            <person name="Lew H."/>
            <person name="Lin D."/>
            <person name="Mosedale D."/>
            <person name="Nakahara K."/>
            <person name="Namath A."/>
            <person name="Norgren R."/>
            <person name="Oefner P."/>
            <person name="Oh C."/>
            <person name="Petel F.X."/>
            <person name="Roberts D."/>
            <person name="Sehl P."/>
            <person name="Schramm S."/>
            <person name="Shogren T."/>
            <person name="Smith V."/>
            <person name="Taylor P."/>
            <person name="Wei Y."/>
            <person name="Botstein D."/>
            <person name="Davis R.W."/>
        </authorList>
    </citation>
    <scope>NUCLEOTIDE SEQUENCE [LARGE SCALE GENOMIC DNA]</scope>
    <source>
        <strain>ATCC 204508 / S288c</strain>
    </source>
</reference>
<reference key="2">
    <citation type="journal article" date="2014" name="G3 (Bethesda)">
        <title>The reference genome sequence of Saccharomyces cerevisiae: Then and now.</title>
        <authorList>
            <person name="Engel S.R."/>
            <person name="Dietrich F.S."/>
            <person name="Fisk D.G."/>
            <person name="Binkley G."/>
            <person name="Balakrishnan R."/>
            <person name="Costanzo M.C."/>
            <person name="Dwight S.S."/>
            <person name="Hitz B.C."/>
            <person name="Karra K."/>
            <person name="Nash R.S."/>
            <person name="Weng S."/>
            <person name="Wong E.D."/>
            <person name="Lloyd P."/>
            <person name="Skrzypek M.S."/>
            <person name="Miyasato S.R."/>
            <person name="Simison M."/>
            <person name="Cherry J.M."/>
        </authorList>
    </citation>
    <scope>GENOME REANNOTATION</scope>
    <source>
        <strain>ATCC 204508 / S288c</strain>
    </source>
</reference>
<reference key="3">
    <citation type="journal article" date="1997" name="Nucleic Acids Res.">
        <title>Variations of the C2H2 zinc finger motif in the yeast genome and classification of yeast zinc finger proteins.</title>
        <authorList>
            <person name="Boehm S."/>
            <person name="Frishman D."/>
            <person name="Mewes H.-W."/>
        </authorList>
    </citation>
    <scope>DOMAIN ATYPICAL ZINC-FINGER</scope>
</reference>
<reference key="4">
    <citation type="journal article" date="1999" name="Mol. Cell. Biol.">
        <title>RPH1 and GIS1 are damage-responsive repressors of PHR1.</title>
        <authorList>
            <person name="Jang Y.K."/>
            <person name="Wang L."/>
            <person name="Sancar G.B."/>
        </authorList>
    </citation>
    <scope>FUNCTION IN TRANSCRIPTIONAL REPRESSION</scope>
</reference>
<reference key="5">
    <citation type="journal article" date="2002" name="Nucleic Acids Res.">
        <title>Phosphorylation of Rph1, a damage-responsive repressor of PHR1 in Saccharomyces cerevisiae, is dependent upon Rad53 kinase.</title>
        <authorList>
            <person name="Kim E.M."/>
            <person name="Jang Y.K."/>
            <person name="Park S.D."/>
        </authorList>
    </citation>
    <scope>FUNCTION</scope>
    <scope>PHOSPHORYLATION BY RAD53</scope>
</reference>
<reference key="6">
    <citation type="journal article" date="2003" name="Nature">
        <title>Global analysis of protein localization in budding yeast.</title>
        <authorList>
            <person name="Huh W.-K."/>
            <person name="Falvo J.V."/>
            <person name="Gerke L.C."/>
            <person name="Carroll A.S."/>
            <person name="Howson R.W."/>
            <person name="Weissman J.S."/>
            <person name="O'Shea E.K."/>
        </authorList>
    </citation>
    <scope>SUBCELLULAR LOCATION [LARGE SCALE ANALYSIS]</scope>
</reference>
<reference key="7">
    <citation type="journal article" date="2003" name="Nature">
        <title>Global analysis of protein expression in yeast.</title>
        <authorList>
            <person name="Ghaemmaghami S."/>
            <person name="Huh W.-K."/>
            <person name="Bower K."/>
            <person name="Howson R.W."/>
            <person name="Belle A."/>
            <person name="Dephoure N."/>
            <person name="O'Shea E.K."/>
            <person name="Weissman J.S."/>
        </authorList>
    </citation>
    <scope>LEVEL OF PROTEIN EXPRESSION [LARGE SCALE ANALYSIS]</scope>
</reference>
<reference key="8">
    <citation type="journal article" date="2007" name="J. Proteome Res.">
        <title>Large-scale phosphorylation analysis of alpha-factor-arrested Saccharomyces cerevisiae.</title>
        <authorList>
            <person name="Li X."/>
            <person name="Gerber S.A."/>
            <person name="Rudner A.D."/>
            <person name="Beausoleil S.A."/>
            <person name="Haas W."/>
            <person name="Villen J."/>
            <person name="Elias J.E."/>
            <person name="Gygi S.P."/>
        </authorList>
    </citation>
    <scope>PHOSPHORYLATION [LARGE SCALE ANALYSIS] AT SER-561 AND SER-689</scope>
    <scope>IDENTIFICATION BY MASS SPECTROMETRY [LARGE SCALE ANALYSIS]</scope>
    <source>
        <strain>ADR376</strain>
    </source>
</reference>
<reference key="9">
    <citation type="journal article" date="2007" name="Proc. Natl. Acad. Sci. U.S.A.">
        <title>Analysis of phosphorylation sites on proteins from Saccharomyces cerevisiae by electron transfer dissociation (ETD) mass spectrometry.</title>
        <authorList>
            <person name="Chi A."/>
            <person name="Huttenhower C."/>
            <person name="Geer L.Y."/>
            <person name="Coon J.J."/>
            <person name="Syka J.E.P."/>
            <person name="Bai D.L."/>
            <person name="Shabanowitz J."/>
            <person name="Burke D.J."/>
            <person name="Troyanskaya O.G."/>
            <person name="Hunt D.F."/>
        </authorList>
    </citation>
    <scope>PHOSPHORYLATION [LARGE SCALE ANALYSIS] AT SER-652</scope>
    <scope>IDENTIFICATION BY MASS SPECTROMETRY [LARGE SCALE ANALYSIS]</scope>
</reference>
<reference key="10">
    <citation type="journal article" date="2008" name="Mol. Cell. Proteomics">
        <title>A multidimensional chromatography technology for in-depth phosphoproteome analysis.</title>
        <authorList>
            <person name="Albuquerque C.P."/>
            <person name="Smolka M.B."/>
            <person name="Payne S.H."/>
            <person name="Bafna V."/>
            <person name="Eng J."/>
            <person name="Zhou H."/>
        </authorList>
    </citation>
    <scope>PHOSPHORYLATION [LARGE SCALE ANALYSIS] AT SER-561 AND SER-575</scope>
    <scope>IDENTIFICATION BY MASS SPECTROMETRY [LARGE SCALE ANALYSIS]</scope>
</reference>
<reference key="11">
    <citation type="journal article" date="2009" name="Science">
        <title>Global analysis of Cdk1 substrate phosphorylation sites provides insights into evolution.</title>
        <authorList>
            <person name="Holt L.J."/>
            <person name="Tuch B.B."/>
            <person name="Villen J."/>
            <person name="Johnson A.D."/>
            <person name="Gygi S.P."/>
            <person name="Morgan D.O."/>
        </authorList>
    </citation>
    <scope>PHOSPHORYLATION [LARGE SCALE ANALYSIS] AT THR-399; SER-430; SER-459; SER-557; SER-561; SER-575; SER-584 AND SER-689</scope>
    <scope>IDENTIFICATION BY MASS SPECTROMETRY [LARGE SCALE ANALYSIS]</scope>
</reference>
<gene>
    <name type="primary">RPH1</name>
    <name type="ordered locus">YER169W</name>
</gene>
<organism>
    <name type="scientific">Saccharomyces cerevisiae (strain ATCC 204508 / S288c)</name>
    <name type="common">Baker's yeast</name>
    <dbReference type="NCBI Taxonomy" id="559292"/>
    <lineage>
        <taxon>Eukaryota</taxon>
        <taxon>Fungi</taxon>
        <taxon>Dikarya</taxon>
        <taxon>Ascomycota</taxon>
        <taxon>Saccharomycotina</taxon>
        <taxon>Saccharomycetes</taxon>
        <taxon>Saccharomycetales</taxon>
        <taxon>Saccharomycetaceae</taxon>
        <taxon>Saccharomyces</taxon>
    </lineage>
</organism>
<protein>
    <recommendedName>
        <fullName>DNA damage-responsive transcriptional repressor RPH1</fullName>
    </recommendedName>
</protein>
<sequence>MTKLIAPSEIVGGVPVFKPTYEQFEDFYAYCKAINKYGMKSGVVKVIPPKEWKDKLDLPYSAETLQKIKIKSPIQQHISGNKGLFMVQNVEKNKTYNIIQWKDLSKDYVPPEDPKARRNSRKGSVSKSTKLKLKNFESSFNIDDFEQFRTEYTIDLSDFQNTERLKFLEEYYWKTLNFTTPMYGADTPGSIFPEGLNVWNVAKLPNILDHMETKVPGVNDSYLYAGLWKASFSWHLEDQDLYSINYIHFGAPKQWYSIPQEDRFKFYKFMQEQFPEEAKNCPEFLRHKMFLASPKLLQENGIRCNEIVHHEGEFMITYPYGYHAGFNYGYNLAESVNFALEEWLPIGKKAGKCHCISDSVEIDVKKLAKSWRDNNKESKGTPPLNQLPNPAMPLLHRPTLKEMESSSLRSTSPDVGHFSNFKSKSSGVSSPLLSRMKDYSNIVEPTLEDPTLKLKRISSFQEQPLNKLLKRETSQTAMLTDHEDNIVAMSLTSMANSAASSPRLPLSRLNSSNELSNAQPLLDMTNNTLAFPRPNGPSGLNPLLYISNKNISGISHSAPHSPVNPNISLIKRVKSPNIVTLNISRESSRSPIALNYEARQQHSQQHSFSTPSTVSNLSTSVLGPLSDTNDIKTPHPERPNHKTANRILKKESPVETSKSNLILSKVASTRQEDSFTSRNDDLDKEQGSSPLNSKFAPEEIVLSGKNKIYICKECQRKFSSGHHLTRHKKSVHSGEKPHSCPKCGKRFKRRDHVLQHLNKKIPCISNETTVDAPIMNPTVQPQDGKAAINQQSTPLN</sequence>
<feature type="chain" id="PRO_0000046849" description="DNA damage-responsive transcriptional repressor RPH1">
    <location>
        <begin position="1"/>
        <end position="796"/>
    </location>
</feature>
<feature type="domain" description="JmjN" evidence="2">
    <location>
        <begin position="14"/>
        <end position="55"/>
    </location>
</feature>
<feature type="domain" description="JmjC" evidence="3">
    <location>
        <begin position="193"/>
        <end position="355"/>
    </location>
</feature>
<feature type="zinc finger region" description="C2H2-type 1" evidence="1">
    <location>
        <begin position="709"/>
        <end position="732"/>
    </location>
</feature>
<feature type="zinc finger region" description="C2H2-type 2; atypical" evidence="1">
    <location>
        <begin position="738"/>
        <end position="763"/>
    </location>
</feature>
<feature type="region of interest" description="Disordered" evidence="4">
    <location>
        <begin position="599"/>
        <end position="692"/>
    </location>
</feature>
<feature type="region of interest" description="Disordered" evidence="4">
    <location>
        <begin position="774"/>
        <end position="796"/>
    </location>
</feature>
<feature type="short sequence motif" description="Bipartite nuclear localization signal">
    <location>
        <begin position="455"/>
        <end position="471"/>
    </location>
</feature>
<feature type="compositionally biased region" description="Polar residues" evidence="4">
    <location>
        <begin position="601"/>
        <end position="621"/>
    </location>
</feature>
<feature type="compositionally biased region" description="Basic and acidic residues" evidence="4">
    <location>
        <begin position="629"/>
        <end position="640"/>
    </location>
</feature>
<feature type="compositionally biased region" description="Polar residues" evidence="4">
    <location>
        <begin position="654"/>
        <end position="669"/>
    </location>
</feature>
<feature type="compositionally biased region" description="Basic and acidic residues" evidence="4">
    <location>
        <begin position="670"/>
        <end position="686"/>
    </location>
</feature>
<feature type="modified residue" description="Phosphothreonine" evidence="12">
    <location>
        <position position="399"/>
    </location>
</feature>
<feature type="modified residue" description="Phosphoserine" evidence="12">
    <location>
        <position position="430"/>
    </location>
</feature>
<feature type="modified residue" description="Phosphoserine" evidence="12">
    <location>
        <position position="459"/>
    </location>
</feature>
<feature type="modified residue" description="Phosphoserine" evidence="12">
    <location>
        <position position="557"/>
    </location>
</feature>
<feature type="modified residue" description="Phosphoserine" evidence="10 11 12">
    <location>
        <position position="561"/>
    </location>
</feature>
<feature type="modified residue" description="Phosphoserine" evidence="11 12">
    <location>
        <position position="575"/>
    </location>
</feature>
<feature type="modified residue" description="Phosphoserine" evidence="12">
    <location>
        <position position="584"/>
    </location>
</feature>
<feature type="modified residue" description="Phosphoserine" evidence="9">
    <location>
        <position position="652"/>
    </location>
</feature>
<feature type="modified residue" description="Phosphoserine" evidence="10 12">
    <location>
        <position position="689"/>
    </location>
</feature>
<feature type="strand" evidence="13">
    <location>
        <begin position="9"/>
        <end position="17"/>
    </location>
</feature>
<feature type="helix" evidence="13">
    <location>
        <begin position="21"/>
        <end position="24"/>
    </location>
</feature>
<feature type="helix" evidence="13">
    <location>
        <begin position="27"/>
        <end position="32"/>
    </location>
</feature>
<feature type="helix" evidence="13">
    <location>
        <begin position="35"/>
        <end position="38"/>
    </location>
</feature>
<feature type="strand" evidence="13">
    <location>
        <begin position="41"/>
        <end position="46"/>
    </location>
</feature>
<feature type="helix" evidence="13">
    <location>
        <begin position="50"/>
        <end position="53"/>
    </location>
</feature>
<feature type="helix" evidence="13">
    <location>
        <begin position="62"/>
        <end position="67"/>
    </location>
</feature>
<feature type="strand" evidence="13">
    <location>
        <begin position="69"/>
        <end position="72"/>
    </location>
</feature>
<feature type="strand" evidence="13">
    <location>
        <begin position="74"/>
        <end position="91"/>
    </location>
</feature>
<feature type="strand" evidence="13">
    <location>
        <begin position="95"/>
        <end position="97"/>
    </location>
</feature>
<feature type="helix" evidence="13">
    <location>
        <begin position="98"/>
        <end position="104"/>
    </location>
</feature>
<feature type="turn" evidence="14">
    <location>
        <begin position="105"/>
        <end position="107"/>
    </location>
</feature>
<feature type="helix" evidence="13">
    <location>
        <begin position="142"/>
        <end position="148"/>
    </location>
</feature>
<feature type="turn" evidence="13">
    <location>
        <begin position="149"/>
        <end position="151"/>
    </location>
</feature>
<feature type="helix" evidence="14">
    <location>
        <begin position="157"/>
        <end position="160"/>
    </location>
</feature>
<feature type="helix" evidence="13">
    <location>
        <begin position="162"/>
        <end position="174"/>
    </location>
</feature>
<feature type="turn" evidence="13">
    <location>
        <begin position="175"/>
        <end position="178"/>
    </location>
</feature>
<feature type="strand" evidence="13">
    <location>
        <begin position="182"/>
        <end position="188"/>
    </location>
</feature>
<feature type="strand" evidence="14">
    <location>
        <begin position="201"/>
        <end position="203"/>
    </location>
</feature>
<feature type="strand" evidence="13">
    <location>
        <begin position="222"/>
        <end position="226"/>
    </location>
</feature>
<feature type="strand" evidence="13">
    <location>
        <begin position="231"/>
        <end position="235"/>
    </location>
</feature>
<feature type="helix" evidence="13">
    <location>
        <begin position="238"/>
        <end position="240"/>
    </location>
</feature>
<feature type="strand" evidence="13">
    <location>
        <begin position="242"/>
        <end position="251"/>
    </location>
</feature>
<feature type="strand" evidence="13">
    <location>
        <begin position="253"/>
        <end position="257"/>
    </location>
</feature>
<feature type="helix" evidence="13">
    <location>
        <begin position="260"/>
        <end position="262"/>
    </location>
</feature>
<feature type="helix" evidence="13">
    <location>
        <begin position="263"/>
        <end position="272"/>
    </location>
</feature>
<feature type="helix" evidence="13">
    <location>
        <begin position="275"/>
        <end position="278"/>
    </location>
</feature>
<feature type="turn" evidence="13">
    <location>
        <begin position="285"/>
        <end position="287"/>
    </location>
</feature>
<feature type="strand" evidence="13">
    <location>
        <begin position="290"/>
        <end position="292"/>
    </location>
</feature>
<feature type="helix" evidence="13">
    <location>
        <begin position="294"/>
        <end position="298"/>
    </location>
</feature>
<feature type="turn" evidence="13">
    <location>
        <begin position="299"/>
        <end position="301"/>
    </location>
</feature>
<feature type="strand" evidence="13">
    <location>
        <begin position="305"/>
        <end position="309"/>
    </location>
</feature>
<feature type="strand" evidence="13">
    <location>
        <begin position="314"/>
        <end position="317"/>
    </location>
</feature>
<feature type="strand" evidence="13">
    <location>
        <begin position="323"/>
        <end position="338"/>
    </location>
</feature>
<accession>P39956</accession>
<accession>D3DM77</accession>
<evidence type="ECO:0000255" key="1">
    <source>
        <dbReference type="PROSITE-ProRule" id="PRU00042"/>
    </source>
</evidence>
<evidence type="ECO:0000255" key="2">
    <source>
        <dbReference type="PROSITE-ProRule" id="PRU00537"/>
    </source>
</evidence>
<evidence type="ECO:0000255" key="3">
    <source>
        <dbReference type="PROSITE-ProRule" id="PRU00538"/>
    </source>
</evidence>
<evidence type="ECO:0000256" key="4">
    <source>
        <dbReference type="SAM" id="MobiDB-lite"/>
    </source>
</evidence>
<evidence type="ECO:0000269" key="5">
    <source>
    </source>
</evidence>
<evidence type="ECO:0000269" key="6">
    <source>
    </source>
</evidence>
<evidence type="ECO:0000269" key="7">
    <source>
    </source>
</evidence>
<evidence type="ECO:0000269" key="8">
    <source>
    </source>
</evidence>
<evidence type="ECO:0007744" key="9">
    <source>
    </source>
</evidence>
<evidence type="ECO:0007744" key="10">
    <source>
    </source>
</evidence>
<evidence type="ECO:0007744" key="11">
    <source>
    </source>
</evidence>
<evidence type="ECO:0007744" key="12">
    <source>
    </source>
</evidence>
<evidence type="ECO:0007829" key="13">
    <source>
        <dbReference type="PDB" id="3OPT"/>
    </source>
</evidence>
<evidence type="ECO:0007829" key="14">
    <source>
        <dbReference type="PDB" id="3OPW"/>
    </source>
</evidence>